<name>ACPS_ENTFA</name>
<feature type="chain" id="PRO_0000175647" description="Holo-[acyl-carrier-protein] synthase">
    <location>
        <begin position="1"/>
        <end position="117"/>
    </location>
</feature>
<feature type="binding site" evidence="1">
    <location>
        <position position="8"/>
    </location>
    <ligand>
        <name>Mg(2+)</name>
        <dbReference type="ChEBI" id="CHEBI:18420"/>
    </ligand>
</feature>
<feature type="binding site" evidence="1">
    <location>
        <position position="58"/>
    </location>
    <ligand>
        <name>Mg(2+)</name>
        <dbReference type="ChEBI" id="CHEBI:18420"/>
    </ligand>
</feature>
<gene>
    <name evidence="1" type="primary">acpS</name>
    <name type="ordered locus">EF_0848</name>
</gene>
<comment type="function">
    <text evidence="1">Transfers the 4'-phosphopantetheine moiety from coenzyme A to a Ser of acyl-carrier-protein.</text>
</comment>
<comment type="catalytic activity">
    <reaction evidence="1">
        <text>apo-[ACP] + CoA = holo-[ACP] + adenosine 3',5'-bisphosphate + H(+)</text>
        <dbReference type="Rhea" id="RHEA:12068"/>
        <dbReference type="Rhea" id="RHEA-COMP:9685"/>
        <dbReference type="Rhea" id="RHEA-COMP:9690"/>
        <dbReference type="ChEBI" id="CHEBI:15378"/>
        <dbReference type="ChEBI" id="CHEBI:29999"/>
        <dbReference type="ChEBI" id="CHEBI:57287"/>
        <dbReference type="ChEBI" id="CHEBI:58343"/>
        <dbReference type="ChEBI" id="CHEBI:64479"/>
        <dbReference type="EC" id="2.7.8.7"/>
    </reaction>
</comment>
<comment type="cofactor">
    <cofactor evidence="1">
        <name>Mg(2+)</name>
        <dbReference type="ChEBI" id="CHEBI:18420"/>
    </cofactor>
</comment>
<comment type="subcellular location">
    <subcellularLocation>
        <location evidence="1">Cytoplasm</location>
    </subcellularLocation>
</comment>
<comment type="similarity">
    <text evidence="1">Belongs to the P-Pant transferase superfamily. AcpS family.</text>
</comment>
<keyword id="KW-0963">Cytoplasm</keyword>
<keyword id="KW-0275">Fatty acid biosynthesis</keyword>
<keyword id="KW-0276">Fatty acid metabolism</keyword>
<keyword id="KW-0444">Lipid biosynthesis</keyword>
<keyword id="KW-0443">Lipid metabolism</keyword>
<keyword id="KW-0460">Magnesium</keyword>
<keyword id="KW-0479">Metal-binding</keyword>
<keyword id="KW-1185">Reference proteome</keyword>
<keyword id="KW-0808">Transferase</keyword>
<evidence type="ECO:0000255" key="1">
    <source>
        <dbReference type="HAMAP-Rule" id="MF_00101"/>
    </source>
</evidence>
<accession>Q820V0</accession>
<sequence length="117" mass="12817">MIKGIGIDAVELSRIKPIVEKQGSFIQRVLTPNELTLFEKLSTKRQIEFLAGRFACKEAFSKAWGTGIGKVGLQDIEVLTEKTGAPYVANSPHNGKVFVSITHTETMAIAQIVLESE</sequence>
<reference key="1">
    <citation type="journal article" date="2003" name="Science">
        <title>Role of mobile DNA in the evolution of vancomycin-resistant Enterococcus faecalis.</title>
        <authorList>
            <person name="Paulsen I.T."/>
            <person name="Banerjei L."/>
            <person name="Myers G.S.A."/>
            <person name="Nelson K.E."/>
            <person name="Seshadri R."/>
            <person name="Read T.D."/>
            <person name="Fouts D.E."/>
            <person name="Eisen J.A."/>
            <person name="Gill S.R."/>
            <person name="Heidelberg J.F."/>
            <person name="Tettelin H."/>
            <person name="Dodson R.J."/>
            <person name="Umayam L.A."/>
            <person name="Brinkac L.M."/>
            <person name="Beanan M.J."/>
            <person name="Daugherty S.C."/>
            <person name="DeBoy R.T."/>
            <person name="Durkin S.A."/>
            <person name="Kolonay J.F."/>
            <person name="Madupu R."/>
            <person name="Nelson W.C."/>
            <person name="Vamathevan J.J."/>
            <person name="Tran B."/>
            <person name="Upton J."/>
            <person name="Hansen T."/>
            <person name="Shetty J."/>
            <person name="Khouri H.M."/>
            <person name="Utterback T.R."/>
            <person name="Radune D."/>
            <person name="Ketchum K.A."/>
            <person name="Dougherty B.A."/>
            <person name="Fraser C.M."/>
        </authorList>
    </citation>
    <scope>NUCLEOTIDE SEQUENCE [LARGE SCALE GENOMIC DNA]</scope>
    <source>
        <strain>ATCC 700802 / V583</strain>
    </source>
</reference>
<organism>
    <name type="scientific">Enterococcus faecalis (strain ATCC 700802 / V583)</name>
    <dbReference type="NCBI Taxonomy" id="226185"/>
    <lineage>
        <taxon>Bacteria</taxon>
        <taxon>Bacillati</taxon>
        <taxon>Bacillota</taxon>
        <taxon>Bacilli</taxon>
        <taxon>Lactobacillales</taxon>
        <taxon>Enterococcaceae</taxon>
        <taxon>Enterococcus</taxon>
    </lineage>
</organism>
<dbReference type="EC" id="2.7.8.7" evidence="1"/>
<dbReference type="EMBL" id="AE016830">
    <property type="protein sequence ID" value="AAO80660.1"/>
    <property type="molecule type" value="Genomic_DNA"/>
</dbReference>
<dbReference type="RefSeq" id="NP_814590.1">
    <property type="nucleotide sequence ID" value="NC_004668.1"/>
</dbReference>
<dbReference type="RefSeq" id="WP_002379159.1">
    <property type="nucleotide sequence ID" value="NZ_KE136527.1"/>
</dbReference>
<dbReference type="SMR" id="Q820V0"/>
<dbReference type="STRING" id="226185.EF_0848"/>
<dbReference type="EnsemblBacteria" id="AAO80660">
    <property type="protein sequence ID" value="AAO80660"/>
    <property type="gene ID" value="EF_0848"/>
</dbReference>
<dbReference type="KEGG" id="efa:EF0848"/>
<dbReference type="PATRIC" id="fig|226185.46.peg.1253"/>
<dbReference type="eggNOG" id="COG0736">
    <property type="taxonomic scope" value="Bacteria"/>
</dbReference>
<dbReference type="HOGENOM" id="CLU_089696_1_2_9"/>
<dbReference type="Proteomes" id="UP000001415">
    <property type="component" value="Chromosome"/>
</dbReference>
<dbReference type="GO" id="GO:0005737">
    <property type="term" value="C:cytoplasm"/>
    <property type="evidence" value="ECO:0007669"/>
    <property type="project" value="UniProtKB-SubCell"/>
</dbReference>
<dbReference type="GO" id="GO:0008897">
    <property type="term" value="F:holo-[acyl-carrier-protein] synthase activity"/>
    <property type="evidence" value="ECO:0007669"/>
    <property type="project" value="UniProtKB-UniRule"/>
</dbReference>
<dbReference type="GO" id="GO:0000287">
    <property type="term" value="F:magnesium ion binding"/>
    <property type="evidence" value="ECO:0007669"/>
    <property type="project" value="UniProtKB-UniRule"/>
</dbReference>
<dbReference type="GO" id="GO:0006633">
    <property type="term" value="P:fatty acid biosynthetic process"/>
    <property type="evidence" value="ECO:0007669"/>
    <property type="project" value="UniProtKB-UniRule"/>
</dbReference>
<dbReference type="Gene3D" id="3.90.470.20">
    <property type="entry name" value="4'-phosphopantetheinyl transferase domain"/>
    <property type="match status" value="1"/>
</dbReference>
<dbReference type="HAMAP" id="MF_00101">
    <property type="entry name" value="AcpS"/>
    <property type="match status" value="1"/>
</dbReference>
<dbReference type="InterPro" id="IPR008278">
    <property type="entry name" value="4-PPantetheinyl_Trfase_dom"/>
</dbReference>
<dbReference type="InterPro" id="IPR037143">
    <property type="entry name" value="4-PPantetheinyl_Trfase_dom_sf"/>
</dbReference>
<dbReference type="InterPro" id="IPR002582">
    <property type="entry name" value="ACPS"/>
</dbReference>
<dbReference type="InterPro" id="IPR004568">
    <property type="entry name" value="Ppantetheine-prot_Trfase_dom"/>
</dbReference>
<dbReference type="NCBIfam" id="TIGR00516">
    <property type="entry name" value="acpS"/>
    <property type="match status" value="1"/>
</dbReference>
<dbReference type="NCBIfam" id="TIGR00556">
    <property type="entry name" value="pantethn_trn"/>
    <property type="match status" value="1"/>
</dbReference>
<dbReference type="Pfam" id="PF01648">
    <property type="entry name" value="ACPS"/>
    <property type="match status" value="1"/>
</dbReference>
<dbReference type="SUPFAM" id="SSF56214">
    <property type="entry name" value="4'-phosphopantetheinyl transferase"/>
    <property type="match status" value="1"/>
</dbReference>
<protein>
    <recommendedName>
        <fullName evidence="1">Holo-[acyl-carrier-protein] synthase</fullName>
        <shortName evidence="1">Holo-ACP synthase</shortName>
        <ecNumber evidence="1">2.7.8.7</ecNumber>
    </recommendedName>
    <alternativeName>
        <fullName evidence="1">4'-phosphopantetheinyl transferase AcpS</fullName>
    </alternativeName>
</protein>
<proteinExistence type="inferred from homology"/>